<sequence>MFRGSHVAIVTPMLEDGALDLDRFCALIDFHIEQGTDGIVVVGTTGESPTVDFDEHDLLIRTAVSYADGRIPIIAGTGANSTREAIELTVFSKNAGADACLSVAPYYNKPTQEGLYQHFKAIAEAVDIPMILYNVPGRTVADISNETTLRLAQIPGIVGIKDATGNIARGCDLVQRVPDNFAVYSGDDATALALLLLGGHGIISVTANVAPRLMHEMCTAALSGDLAQARAINARLFKLHIDLFVEANPIPVKWAVAKMGLINENIRLPLTALSSQHHELIRKAMLQAGITV</sequence>
<evidence type="ECO:0000255" key="1">
    <source>
        <dbReference type="HAMAP-Rule" id="MF_00418"/>
    </source>
</evidence>
<evidence type="ECO:0000305" key="2"/>
<comment type="function">
    <text evidence="1">Catalyzes the condensation of (S)-aspartate-beta-semialdehyde [(S)-ASA] and pyruvate to 4-hydroxy-tetrahydrodipicolinate (HTPA).</text>
</comment>
<comment type="catalytic activity">
    <reaction evidence="1">
        <text>L-aspartate 4-semialdehyde + pyruvate = (2S,4S)-4-hydroxy-2,3,4,5-tetrahydrodipicolinate + H2O + H(+)</text>
        <dbReference type="Rhea" id="RHEA:34171"/>
        <dbReference type="ChEBI" id="CHEBI:15361"/>
        <dbReference type="ChEBI" id="CHEBI:15377"/>
        <dbReference type="ChEBI" id="CHEBI:15378"/>
        <dbReference type="ChEBI" id="CHEBI:67139"/>
        <dbReference type="ChEBI" id="CHEBI:537519"/>
        <dbReference type="EC" id="4.3.3.7"/>
    </reaction>
</comment>
<comment type="pathway">
    <text evidence="1">Amino-acid biosynthesis; L-lysine biosynthesis via DAP pathway; (S)-tetrahydrodipicolinate from L-aspartate: step 3/4.</text>
</comment>
<comment type="subunit">
    <text evidence="1">Homotetramer; dimer of dimers.</text>
</comment>
<comment type="subcellular location">
    <subcellularLocation>
        <location evidence="1">Cytoplasm</location>
    </subcellularLocation>
</comment>
<comment type="similarity">
    <text evidence="1">Belongs to the DapA family.</text>
</comment>
<comment type="caution">
    <text evidence="2">Was originally thought to be a dihydrodipicolinate synthase (DHDPS), catalyzing the condensation of (S)-aspartate-beta-semialdehyde [(S)-ASA] and pyruvate to dihydrodipicolinate (DHDP). However, it was shown in E.coli that the product of the enzymatic reaction is not dihydrodipicolinate but in fact (4S)-4-hydroxy-2,3,4,5-tetrahydro-(2S)-dipicolinic acid (HTPA), and that the consecutive dehydration reaction leading to DHDP is not spontaneous but catalyzed by DapB.</text>
</comment>
<accession>Q0AI27</accession>
<protein>
    <recommendedName>
        <fullName evidence="1">4-hydroxy-tetrahydrodipicolinate synthase</fullName>
        <shortName evidence="1">HTPA synthase</shortName>
        <ecNumber evidence="1">4.3.3.7</ecNumber>
    </recommendedName>
</protein>
<dbReference type="EC" id="4.3.3.7" evidence="1"/>
<dbReference type="EMBL" id="CP000450">
    <property type="protein sequence ID" value="ABI59005.1"/>
    <property type="molecule type" value="Genomic_DNA"/>
</dbReference>
<dbReference type="RefSeq" id="WP_011633830.1">
    <property type="nucleotide sequence ID" value="NC_008344.1"/>
</dbReference>
<dbReference type="SMR" id="Q0AI27"/>
<dbReference type="STRING" id="335283.Neut_0733"/>
<dbReference type="KEGG" id="net:Neut_0733"/>
<dbReference type="eggNOG" id="COG0329">
    <property type="taxonomic scope" value="Bacteria"/>
</dbReference>
<dbReference type="HOGENOM" id="CLU_049343_7_1_4"/>
<dbReference type="OrthoDB" id="9782828at2"/>
<dbReference type="UniPathway" id="UPA00034">
    <property type="reaction ID" value="UER00017"/>
</dbReference>
<dbReference type="Proteomes" id="UP000001966">
    <property type="component" value="Chromosome"/>
</dbReference>
<dbReference type="GO" id="GO:0005829">
    <property type="term" value="C:cytosol"/>
    <property type="evidence" value="ECO:0007669"/>
    <property type="project" value="TreeGrafter"/>
</dbReference>
<dbReference type="GO" id="GO:0008840">
    <property type="term" value="F:4-hydroxy-tetrahydrodipicolinate synthase activity"/>
    <property type="evidence" value="ECO:0007669"/>
    <property type="project" value="UniProtKB-UniRule"/>
</dbReference>
<dbReference type="GO" id="GO:0019877">
    <property type="term" value="P:diaminopimelate biosynthetic process"/>
    <property type="evidence" value="ECO:0007669"/>
    <property type="project" value="UniProtKB-UniRule"/>
</dbReference>
<dbReference type="GO" id="GO:0009089">
    <property type="term" value="P:lysine biosynthetic process via diaminopimelate"/>
    <property type="evidence" value="ECO:0007669"/>
    <property type="project" value="UniProtKB-UniRule"/>
</dbReference>
<dbReference type="CDD" id="cd00950">
    <property type="entry name" value="DHDPS"/>
    <property type="match status" value="1"/>
</dbReference>
<dbReference type="Gene3D" id="3.20.20.70">
    <property type="entry name" value="Aldolase class I"/>
    <property type="match status" value="1"/>
</dbReference>
<dbReference type="HAMAP" id="MF_00418">
    <property type="entry name" value="DapA"/>
    <property type="match status" value="1"/>
</dbReference>
<dbReference type="InterPro" id="IPR013785">
    <property type="entry name" value="Aldolase_TIM"/>
</dbReference>
<dbReference type="InterPro" id="IPR005263">
    <property type="entry name" value="DapA"/>
</dbReference>
<dbReference type="InterPro" id="IPR002220">
    <property type="entry name" value="DapA-like"/>
</dbReference>
<dbReference type="InterPro" id="IPR020625">
    <property type="entry name" value="Schiff_base-form_aldolases_AS"/>
</dbReference>
<dbReference type="InterPro" id="IPR020624">
    <property type="entry name" value="Schiff_base-form_aldolases_CS"/>
</dbReference>
<dbReference type="NCBIfam" id="TIGR00674">
    <property type="entry name" value="dapA"/>
    <property type="match status" value="1"/>
</dbReference>
<dbReference type="PANTHER" id="PTHR12128:SF66">
    <property type="entry name" value="4-HYDROXY-2-OXOGLUTARATE ALDOLASE, MITOCHONDRIAL"/>
    <property type="match status" value="1"/>
</dbReference>
<dbReference type="PANTHER" id="PTHR12128">
    <property type="entry name" value="DIHYDRODIPICOLINATE SYNTHASE"/>
    <property type="match status" value="1"/>
</dbReference>
<dbReference type="Pfam" id="PF00701">
    <property type="entry name" value="DHDPS"/>
    <property type="match status" value="1"/>
</dbReference>
<dbReference type="PIRSF" id="PIRSF001365">
    <property type="entry name" value="DHDPS"/>
    <property type="match status" value="1"/>
</dbReference>
<dbReference type="PRINTS" id="PR00146">
    <property type="entry name" value="DHPICSNTHASE"/>
</dbReference>
<dbReference type="SMART" id="SM01130">
    <property type="entry name" value="DHDPS"/>
    <property type="match status" value="1"/>
</dbReference>
<dbReference type="SUPFAM" id="SSF51569">
    <property type="entry name" value="Aldolase"/>
    <property type="match status" value="1"/>
</dbReference>
<dbReference type="PROSITE" id="PS00665">
    <property type="entry name" value="DHDPS_1"/>
    <property type="match status" value="1"/>
</dbReference>
<dbReference type="PROSITE" id="PS00666">
    <property type="entry name" value="DHDPS_2"/>
    <property type="match status" value="1"/>
</dbReference>
<keyword id="KW-0028">Amino-acid biosynthesis</keyword>
<keyword id="KW-0963">Cytoplasm</keyword>
<keyword id="KW-0220">Diaminopimelate biosynthesis</keyword>
<keyword id="KW-0456">Lyase</keyword>
<keyword id="KW-0457">Lysine biosynthesis</keyword>
<keyword id="KW-0704">Schiff base</keyword>
<feature type="chain" id="PRO_1000050230" description="4-hydroxy-tetrahydrodipicolinate synthase">
    <location>
        <begin position="1"/>
        <end position="292"/>
    </location>
</feature>
<feature type="active site" description="Proton donor/acceptor" evidence="1">
    <location>
        <position position="133"/>
    </location>
</feature>
<feature type="active site" description="Schiff-base intermediate with substrate" evidence="1">
    <location>
        <position position="161"/>
    </location>
</feature>
<feature type="binding site" evidence="1">
    <location>
        <position position="45"/>
    </location>
    <ligand>
        <name>pyruvate</name>
        <dbReference type="ChEBI" id="CHEBI:15361"/>
    </ligand>
</feature>
<feature type="binding site" evidence="1">
    <location>
        <position position="203"/>
    </location>
    <ligand>
        <name>pyruvate</name>
        <dbReference type="ChEBI" id="CHEBI:15361"/>
    </ligand>
</feature>
<feature type="site" description="Part of a proton relay during catalysis" evidence="1">
    <location>
        <position position="44"/>
    </location>
</feature>
<feature type="site" description="Part of a proton relay during catalysis" evidence="1">
    <location>
        <position position="107"/>
    </location>
</feature>
<proteinExistence type="inferred from homology"/>
<organism>
    <name type="scientific">Nitrosomonas eutropha (strain DSM 101675 / C91 / Nm57)</name>
    <dbReference type="NCBI Taxonomy" id="335283"/>
    <lineage>
        <taxon>Bacteria</taxon>
        <taxon>Pseudomonadati</taxon>
        <taxon>Pseudomonadota</taxon>
        <taxon>Betaproteobacteria</taxon>
        <taxon>Nitrosomonadales</taxon>
        <taxon>Nitrosomonadaceae</taxon>
        <taxon>Nitrosomonas</taxon>
    </lineage>
</organism>
<name>DAPA_NITEC</name>
<gene>
    <name evidence="1" type="primary">dapA</name>
    <name type="ordered locus">Neut_0733</name>
</gene>
<reference key="1">
    <citation type="journal article" date="2007" name="Environ. Microbiol.">
        <title>Whole-genome analysis of the ammonia-oxidizing bacterium, Nitrosomonas eutropha C91: implications for niche adaptation.</title>
        <authorList>
            <person name="Stein L.Y."/>
            <person name="Arp D.J."/>
            <person name="Berube P.M."/>
            <person name="Chain P.S."/>
            <person name="Hauser L."/>
            <person name="Jetten M.S."/>
            <person name="Klotz M.G."/>
            <person name="Larimer F.W."/>
            <person name="Norton J.M."/>
            <person name="Op den Camp H.J.M."/>
            <person name="Shin M."/>
            <person name="Wei X."/>
        </authorList>
    </citation>
    <scope>NUCLEOTIDE SEQUENCE [LARGE SCALE GENOMIC DNA]</scope>
    <source>
        <strain>DSM 101675 / C91 / Nm57</strain>
    </source>
</reference>